<name>KATG_PODAN</name>
<accession>B2ASU5</accession>
<accession>A0A090CUI8</accession>
<protein>
    <recommendedName>
        <fullName evidence="1">Catalase-peroxidase</fullName>
        <shortName evidence="1">CP</shortName>
        <ecNumber evidence="1">1.11.1.21</ecNumber>
    </recommendedName>
    <alternativeName>
        <fullName evidence="1">Peroxidase/catalase</fullName>
    </alternativeName>
</protein>
<gene>
    <name evidence="1" type="primary">katG</name>
    <name type="ordered locus">Pa_6_11240</name>
    <name type="ORF">PODANS_6_11240</name>
</gene>
<reference key="1">
    <citation type="journal article" date="2008" name="Genome Biol.">
        <title>The genome sequence of the model ascomycete fungus Podospora anserina.</title>
        <authorList>
            <person name="Espagne E."/>
            <person name="Lespinet O."/>
            <person name="Malagnac F."/>
            <person name="Da Silva C."/>
            <person name="Jaillon O."/>
            <person name="Porcel B.M."/>
            <person name="Couloux A."/>
            <person name="Aury J.-M."/>
            <person name="Segurens B."/>
            <person name="Poulain J."/>
            <person name="Anthouard V."/>
            <person name="Grossetete S."/>
            <person name="Khalili H."/>
            <person name="Coppin E."/>
            <person name="Dequard-Chablat M."/>
            <person name="Picard M."/>
            <person name="Contamine V."/>
            <person name="Arnaise S."/>
            <person name="Bourdais A."/>
            <person name="Berteaux-Lecellier V."/>
            <person name="Gautheret D."/>
            <person name="de Vries R.P."/>
            <person name="Battaglia E."/>
            <person name="Coutinho P.M."/>
            <person name="Danchin E.G.J."/>
            <person name="Henrissat B."/>
            <person name="El Khoury R."/>
            <person name="Sainsard-Chanet A."/>
            <person name="Boivin A."/>
            <person name="Pinan-Lucarre B."/>
            <person name="Sellem C.H."/>
            <person name="Debuchy R."/>
            <person name="Wincker P."/>
            <person name="Weissenbach J."/>
            <person name="Silar P."/>
        </authorList>
    </citation>
    <scope>NUCLEOTIDE SEQUENCE [LARGE SCALE GENOMIC DNA]</scope>
    <source>
        <strain>S / ATCC MYA-4624 / DSM 980 / FGSC 10383</strain>
    </source>
</reference>
<reference key="2">
    <citation type="journal article" date="2014" name="Genetics">
        <title>Maintaining two mating types: Structure of the mating type locus and its role in heterokaryosis in Podospora anserina.</title>
        <authorList>
            <person name="Grognet P."/>
            <person name="Bidard F."/>
            <person name="Kuchly C."/>
            <person name="Tong L.C.H."/>
            <person name="Coppin E."/>
            <person name="Benkhali J.A."/>
            <person name="Couloux A."/>
            <person name="Wincker P."/>
            <person name="Debuchy R."/>
            <person name="Silar P."/>
        </authorList>
    </citation>
    <scope>GENOME REANNOTATION</scope>
    <source>
        <strain>S / ATCC MYA-4624 / DSM 980 / FGSC 10383</strain>
    </source>
</reference>
<comment type="function">
    <text evidence="1">Bifunctional enzyme with both catalase and broad-spectrum peroxidase activity.</text>
</comment>
<comment type="catalytic activity">
    <reaction evidence="1">
        <text>H2O2 + AH2 = A + 2 H2O</text>
        <dbReference type="Rhea" id="RHEA:30275"/>
        <dbReference type="ChEBI" id="CHEBI:13193"/>
        <dbReference type="ChEBI" id="CHEBI:15377"/>
        <dbReference type="ChEBI" id="CHEBI:16240"/>
        <dbReference type="ChEBI" id="CHEBI:17499"/>
        <dbReference type="EC" id="1.11.1.21"/>
    </reaction>
</comment>
<comment type="catalytic activity">
    <reaction evidence="1">
        <text>2 H2O2 = O2 + 2 H2O</text>
        <dbReference type="Rhea" id="RHEA:20309"/>
        <dbReference type="ChEBI" id="CHEBI:15377"/>
        <dbReference type="ChEBI" id="CHEBI:15379"/>
        <dbReference type="ChEBI" id="CHEBI:16240"/>
        <dbReference type="EC" id="1.11.1.21"/>
    </reaction>
</comment>
<comment type="cofactor">
    <cofactor evidence="1">
        <name>heme b</name>
        <dbReference type="ChEBI" id="CHEBI:60344"/>
    </cofactor>
    <text evidence="1">Binds 1 heme b (iron(II)-protoporphyrin IX) group per monomer.</text>
</comment>
<comment type="subunit">
    <text evidence="1">Homodimer or homotetramer.</text>
</comment>
<comment type="subcellular location">
    <subcellularLocation>
        <location evidence="1">Cytoplasm</location>
    </subcellularLocation>
</comment>
<comment type="PTM">
    <text evidence="1">Formation of the three residue Trp-Tyr-Met cross-link is important for the catalase, but not the peroxidase activity of the enzyme.</text>
</comment>
<comment type="similarity">
    <text evidence="1">Belongs to the peroxidase family. Peroxidase/catalase subfamily.</text>
</comment>
<dbReference type="EC" id="1.11.1.21" evidence="1"/>
<dbReference type="EMBL" id="CU633898">
    <property type="protein sequence ID" value="CAP67468.1"/>
    <property type="molecule type" value="Genomic_DNA"/>
</dbReference>
<dbReference type="EMBL" id="FO904941">
    <property type="protein sequence ID" value="CDP30334.1"/>
    <property type="molecule type" value="Genomic_DNA"/>
</dbReference>
<dbReference type="RefSeq" id="XP_001906797.1">
    <property type="nucleotide sequence ID" value="XM_001906762.1"/>
</dbReference>
<dbReference type="SMR" id="B2ASU5"/>
<dbReference type="STRING" id="515849.B2ASU5"/>
<dbReference type="PeroxiBase" id="5373">
    <property type="entry name" value="PanCP01"/>
</dbReference>
<dbReference type="GeneID" id="6191100"/>
<dbReference type="KEGG" id="pan:PODANSg3830"/>
<dbReference type="VEuPathDB" id="FungiDB:PODANS_6_11240"/>
<dbReference type="eggNOG" id="ENOG502QTDY">
    <property type="taxonomic scope" value="Eukaryota"/>
</dbReference>
<dbReference type="HOGENOM" id="CLU_025424_2_0_1"/>
<dbReference type="InParanoid" id="B2ASU5"/>
<dbReference type="OrthoDB" id="407695at2759"/>
<dbReference type="Proteomes" id="UP000001197">
    <property type="component" value="Chromosome 6"/>
</dbReference>
<dbReference type="GO" id="GO:0005829">
    <property type="term" value="C:cytosol"/>
    <property type="evidence" value="ECO:0007669"/>
    <property type="project" value="TreeGrafter"/>
</dbReference>
<dbReference type="GO" id="GO:0004096">
    <property type="term" value="F:catalase activity"/>
    <property type="evidence" value="ECO:0007669"/>
    <property type="project" value="UniProtKB-UniRule"/>
</dbReference>
<dbReference type="GO" id="GO:0020037">
    <property type="term" value="F:heme binding"/>
    <property type="evidence" value="ECO:0007669"/>
    <property type="project" value="InterPro"/>
</dbReference>
<dbReference type="GO" id="GO:0046872">
    <property type="term" value="F:metal ion binding"/>
    <property type="evidence" value="ECO:0007669"/>
    <property type="project" value="UniProtKB-KW"/>
</dbReference>
<dbReference type="GO" id="GO:0070301">
    <property type="term" value="P:cellular response to hydrogen peroxide"/>
    <property type="evidence" value="ECO:0007669"/>
    <property type="project" value="TreeGrafter"/>
</dbReference>
<dbReference type="GO" id="GO:0042744">
    <property type="term" value="P:hydrogen peroxide catabolic process"/>
    <property type="evidence" value="ECO:0007669"/>
    <property type="project" value="UniProtKB-KW"/>
</dbReference>
<dbReference type="CDD" id="cd00649">
    <property type="entry name" value="catalase_peroxidase_1"/>
    <property type="match status" value="1"/>
</dbReference>
<dbReference type="CDD" id="cd08200">
    <property type="entry name" value="catalase_peroxidase_2"/>
    <property type="match status" value="1"/>
</dbReference>
<dbReference type="FunFam" id="1.10.420.10:FF:000002">
    <property type="entry name" value="Catalase-peroxidase"/>
    <property type="match status" value="1"/>
</dbReference>
<dbReference type="FunFam" id="1.10.420.10:FF:000004">
    <property type="entry name" value="Catalase-peroxidase"/>
    <property type="match status" value="1"/>
</dbReference>
<dbReference type="FunFam" id="1.10.520.10:FF:000002">
    <property type="entry name" value="Catalase-peroxidase"/>
    <property type="match status" value="1"/>
</dbReference>
<dbReference type="Gene3D" id="1.10.520.10">
    <property type="match status" value="2"/>
</dbReference>
<dbReference type="Gene3D" id="1.10.420.10">
    <property type="entry name" value="Peroxidase, domain 2"/>
    <property type="match status" value="2"/>
</dbReference>
<dbReference type="HAMAP" id="MF_01961">
    <property type="entry name" value="Catal_peroxid"/>
    <property type="match status" value="1"/>
</dbReference>
<dbReference type="InterPro" id="IPR000763">
    <property type="entry name" value="Catalase_peroxidase"/>
</dbReference>
<dbReference type="InterPro" id="IPR002016">
    <property type="entry name" value="Haem_peroxidase"/>
</dbReference>
<dbReference type="InterPro" id="IPR010255">
    <property type="entry name" value="Haem_peroxidase_sf"/>
</dbReference>
<dbReference type="InterPro" id="IPR019794">
    <property type="entry name" value="Peroxidases_AS"/>
</dbReference>
<dbReference type="InterPro" id="IPR019793">
    <property type="entry name" value="Peroxidases_heam-ligand_BS"/>
</dbReference>
<dbReference type="NCBIfam" id="TIGR00198">
    <property type="entry name" value="cat_per_HPI"/>
    <property type="match status" value="1"/>
</dbReference>
<dbReference type="NCBIfam" id="NF011635">
    <property type="entry name" value="PRK15061.1"/>
    <property type="match status" value="1"/>
</dbReference>
<dbReference type="PANTHER" id="PTHR30555:SF0">
    <property type="entry name" value="CATALASE-PEROXIDASE"/>
    <property type="match status" value="1"/>
</dbReference>
<dbReference type="PANTHER" id="PTHR30555">
    <property type="entry name" value="HYDROPEROXIDASE I, BIFUNCTIONAL CATALASE-PEROXIDASE"/>
    <property type="match status" value="1"/>
</dbReference>
<dbReference type="Pfam" id="PF00141">
    <property type="entry name" value="peroxidase"/>
    <property type="match status" value="2"/>
</dbReference>
<dbReference type="PRINTS" id="PR00460">
    <property type="entry name" value="BPEROXIDASE"/>
</dbReference>
<dbReference type="PRINTS" id="PR00458">
    <property type="entry name" value="PEROXIDASE"/>
</dbReference>
<dbReference type="SUPFAM" id="SSF48113">
    <property type="entry name" value="Heme-dependent peroxidases"/>
    <property type="match status" value="2"/>
</dbReference>
<dbReference type="PROSITE" id="PS00435">
    <property type="entry name" value="PEROXIDASE_1"/>
    <property type="match status" value="1"/>
</dbReference>
<dbReference type="PROSITE" id="PS00436">
    <property type="entry name" value="PEROXIDASE_2"/>
    <property type="match status" value="1"/>
</dbReference>
<dbReference type="PROSITE" id="PS50873">
    <property type="entry name" value="PEROXIDASE_4"/>
    <property type="match status" value="1"/>
</dbReference>
<evidence type="ECO:0000255" key="1">
    <source>
        <dbReference type="HAMAP-Rule" id="MF_03108"/>
    </source>
</evidence>
<organism>
    <name type="scientific">Podospora anserina (strain S / ATCC MYA-4624 / DSM 980 / FGSC 10383)</name>
    <name type="common">Pleurage anserina</name>
    <dbReference type="NCBI Taxonomy" id="515849"/>
    <lineage>
        <taxon>Eukaryota</taxon>
        <taxon>Fungi</taxon>
        <taxon>Dikarya</taxon>
        <taxon>Ascomycota</taxon>
        <taxon>Pezizomycotina</taxon>
        <taxon>Sordariomycetes</taxon>
        <taxon>Sordariomycetidae</taxon>
        <taxon>Sordariales</taxon>
        <taxon>Podosporaceae</taxon>
        <taxon>Podospora</taxon>
        <taxon>Podospora anserina</taxon>
    </lineage>
</organism>
<keyword id="KW-0963">Cytoplasm</keyword>
<keyword id="KW-0349">Heme</keyword>
<keyword id="KW-0376">Hydrogen peroxide</keyword>
<keyword id="KW-0408">Iron</keyword>
<keyword id="KW-0479">Metal-binding</keyword>
<keyword id="KW-0560">Oxidoreductase</keyword>
<keyword id="KW-0575">Peroxidase</keyword>
<keyword id="KW-1185">Reference proteome</keyword>
<proteinExistence type="inferred from homology"/>
<feature type="chain" id="PRO_0000354110" description="Catalase-peroxidase">
    <location>
        <begin position="1"/>
        <end position="755"/>
    </location>
</feature>
<feature type="active site" description="Proton acceptor" evidence="1">
    <location>
        <position position="94"/>
    </location>
</feature>
<feature type="binding site" description="axial binding residue" evidence="1">
    <location>
        <position position="282"/>
    </location>
    <ligand>
        <name>heme b</name>
        <dbReference type="ChEBI" id="CHEBI:60344"/>
    </ligand>
    <ligandPart>
        <name>Fe</name>
        <dbReference type="ChEBI" id="CHEBI:18248"/>
    </ligandPart>
</feature>
<feature type="site" description="Transition state stabilizer" evidence="1">
    <location>
        <position position="90"/>
    </location>
</feature>
<feature type="cross-link" description="Tryptophyl-tyrosyl-methioninium (Trp-Tyr) (with M-267)" evidence="1">
    <location>
        <begin position="93"/>
        <end position="241"/>
    </location>
</feature>
<feature type="cross-link" description="Tryptophyl-tyrosyl-methioninium (Tyr-Met) (with W-93)" evidence="1">
    <location>
        <begin position="241"/>
        <end position="267"/>
    </location>
</feature>
<sequence length="755" mass="83151">MGECPVNHTKSANVAGGGTRNIDWWPNQLRLNILRQHTAASDPFHKEFNYAAAFKSLDYNALKKDLTDLMTNSQDWWPADFGHYGGLFIRMAWHSAGTYRVFDGRGGGGQGQQRFAPLNSWPDNVSLDKARRLLWPIKQKYGNKISWADLMLLTGNVALESMGFKTFGFAGGRPDTWEADESAYWGGETTWLGNEARYAHGQEGIAGKGIVSGDESKKNHTDIHNRDLESPLAAAHMGLIYVNPEGPDGNPDPVAAARDIRVTFGRMAMDDEETVALIAGGHTFGKTHGAAPADNVGAEPEAASIEQQGFGWSNKYGSGKGPDTITSGLEVIWTKNPTKWTNQFFEYLFKYEWELTKSPAGANQWVAKNAEPFIPDAYDPNKKHLPRMLTTDLSLRFDPGFEKISRRFLEHTDQFADAFARAWFKLLHRDMGPRSRWLGPEIPSEVLLWEDPLPPLDHPVIDNNDIAAIKREILATGLAPQKLISTAWASASTFRGSDKRGGANGARIRLAPQKDWKVNNPAQLAEVLGALEDVQKRFNEQATGGKKVSLADVIVLGGVAALEQAAGVSVPFTPGRTDASQEQTDVHSFEHLEPYADGFRNYGHGNDRVKTEQYLVDRAHLLTLTAPELAVLVGGLRVLGANYDGSDHGVFTAQPGKLTNDFFVNLLDPNTEWTNVDGKGEVFEGKDRATGQKKWTGTRADLIFGSHSELRAIAEVYGSADGQEKFVKDFVAAWDKVMNLDRFDLEQGAGSSPKL</sequence>